<proteinExistence type="evidence at protein level"/>
<organism>
    <name type="scientific">Mus musculus</name>
    <name type="common">Mouse</name>
    <dbReference type="NCBI Taxonomy" id="10090"/>
    <lineage>
        <taxon>Eukaryota</taxon>
        <taxon>Metazoa</taxon>
        <taxon>Chordata</taxon>
        <taxon>Craniata</taxon>
        <taxon>Vertebrata</taxon>
        <taxon>Euteleostomi</taxon>
        <taxon>Mammalia</taxon>
        <taxon>Eutheria</taxon>
        <taxon>Euarchontoglires</taxon>
        <taxon>Glires</taxon>
        <taxon>Rodentia</taxon>
        <taxon>Myomorpha</taxon>
        <taxon>Muroidea</taxon>
        <taxon>Muridae</taxon>
        <taxon>Murinae</taxon>
        <taxon>Mus</taxon>
        <taxon>Mus</taxon>
    </lineage>
</organism>
<dbReference type="EC" id="3.6.1.5" evidence="2"/>
<dbReference type="EMBL" id="AF037366">
    <property type="protein sequence ID" value="AAB92259.1"/>
    <property type="molecule type" value="mRNA"/>
</dbReference>
<dbReference type="EMBL" id="AF041818">
    <property type="protein sequence ID" value="AAC83203.1"/>
    <property type="molecule type" value="Genomic_DNA"/>
</dbReference>
<dbReference type="EMBL" id="AF041812">
    <property type="protein sequence ID" value="AAC83203.1"/>
    <property type="status" value="JOINED"/>
    <property type="molecule type" value="Genomic_DNA"/>
</dbReference>
<dbReference type="EMBL" id="AF041813">
    <property type="protein sequence ID" value="AAC83203.1"/>
    <property type="status" value="JOINED"/>
    <property type="molecule type" value="Genomic_DNA"/>
</dbReference>
<dbReference type="EMBL" id="AF041814">
    <property type="protein sequence ID" value="AAC83203.1"/>
    <property type="status" value="JOINED"/>
    <property type="molecule type" value="Genomic_DNA"/>
</dbReference>
<dbReference type="EMBL" id="AF041815">
    <property type="protein sequence ID" value="AAC83203.1"/>
    <property type="status" value="JOINED"/>
    <property type="molecule type" value="Genomic_DNA"/>
</dbReference>
<dbReference type="EMBL" id="AF041816">
    <property type="protein sequence ID" value="AAC83203.1"/>
    <property type="status" value="JOINED"/>
    <property type="molecule type" value="Genomic_DNA"/>
</dbReference>
<dbReference type="EMBL" id="AF041817">
    <property type="protein sequence ID" value="AAC83203.1"/>
    <property type="status" value="JOINED"/>
    <property type="molecule type" value="Genomic_DNA"/>
</dbReference>
<dbReference type="CCDS" id="CCDS50434.1"/>
<dbReference type="RefSeq" id="NP_033978.1">
    <property type="nucleotide sequence ID" value="NM_009848.4"/>
</dbReference>
<dbReference type="SMR" id="P55772"/>
<dbReference type="FunCoup" id="P55772">
    <property type="interactions" value="175"/>
</dbReference>
<dbReference type="STRING" id="10090.ENSMUSP00000116285"/>
<dbReference type="BindingDB" id="P55772"/>
<dbReference type="ChEMBL" id="CHEMBL4739681"/>
<dbReference type="GlyCosmos" id="P55772">
    <property type="glycosylation" value="6 sites, No reported glycans"/>
</dbReference>
<dbReference type="GlyGen" id="P55772">
    <property type="glycosylation" value="6 sites, 2 N-linked glycans (2 sites)"/>
</dbReference>
<dbReference type="iPTMnet" id="P55772"/>
<dbReference type="PhosphoSitePlus" id="P55772"/>
<dbReference type="SwissPalm" id="P55772"/>
<dbReference type="jPOST" id="P55772"/>
<dbReference type="PaxDb" id="10090-ENSMUSP00000107850"/>
<dbReference type="ProteomicsDB" id="275457"/>
<dbReference type="Antibodypedia" id="2888">
    <property type="antibodies" value="1055 antibodies from 45 providers"/>
</dbReference>
<dbReference type="DNASU" id="12495"/>
<dbReference type="Ensembl" id="ENSMUST00000112231.9">
    <property type="protein sequence ID" value="ENSMUSP00000107850.3"/>
    <property type="gene ID" value="ENSMUSG00000048120.17"/>
</dbReference>
<dbReference type="GeneID" id="12495"/>
<dbReference type="KEGG" id="mmu:12495"/>
<dbReference type="UCSC" id="uc008hlf.2">
    <property type="organism name" value="mouse"/>
</dbReference>
<dbReference type="AGR" id="MGI:102805"/>
<dbReference type="CTD" id="953"/>
<dbReference type="MGI" id="MGI:102805">
    <property type="gene designation" value="Entpd1"/>
</dbReference>
<dbReference type="VEuPathDB" id="HostDB:ENSMUSG00000048120"/>
<dbReference type="eggNOG" id="KOG1386">
    <property type="taxonomic scope" value="Eukaryota"/>
</dbReference>
<dbReference type="GeneTree" id="ENSGT01110000267162"/>
<dbReference type="HOGENOM" id="CLU_010246_2_3_1"/>
<dbReference type="InParanoid" id="P55772"/>
<dbReference type="OMA" id="PYSHCAF"/>
<dbReference type="OrthoDB" id="6372431at2759"/>
<dbReference type="PhylomeDB" id="P55772"/>
<dbReference type="TreeFam" id="TF332859"/>
<dbReference type="BRENDA" id="3.6.1.5">
    <property type="organism ID" value="3474"/>
</dbReference>
<dbReference type="Reactome" id="R-MMU-8850843">
    <property type="pathway name" value="Phosphate bond hydrolysis by NTPDase proteins"/>
</dbReference>
<dbReference type="SABIO-RK" id="P55772"/>
<dbReference type="BioGRID-ORCS" id="12495">
    <property type="hits" value="1 hit in 63 CRISPR screens"/>
</dbReference>
<dbReference type="ChiTaRS" id="Entpd1">
    <property type="organism name" value="mouse"/>
</dbReference>
<dbReference type="PRO" id="PR:P55772"/>
<dbReference type="Proteomes" id="UP000000589">
    <property type="component" value="Chromosome 19"/>
</dbReference>
<dbReference type="RNAct" id="P55772">
    <property type="molecule type" value="protein"/>
</dbReference>
<dbReference type="Bgee" id="ENSMUSG00000048120">
    <property type="expression patterns" value="Expressed in ectoplacental cone and 188 other cell types or tissues"/>
</dbReference>
<dbReference type="ExpressionAtlas" id="P55772">
    <property type="expression patterns" value="baseline and differential"/>
</dbReference>
<dbReference type="GO" id="GO:0005604">
    <property type="term" value="C:basement membrane"/>
    <property type="evidence" value="ECO:0000314"/>
    <property type="project" value="MGI"/>
</dbReference>
<dbReference type="GO" id="GO:0005901">
    <property type="term" value="C:caveola"/>
    <property type="evidence" value="ECO:0000250"/>
    <property type="project" value="UniProtKB"/>
</dbReference>
<dbReference type="GO" id="GO:0009897">
    <property type="term" value="C:external side of plasma membrane"/>
    <property type="evidence" value="ECO:0000315"/>
    <property type="project" value="MGI"/>
</dbReference>
<dbReference type="GO" id="GO:0005886">
    <property type="term" value="C:plasma membrane"/>
    <property type="evidence" value="ECO:0000250"/>
    <property type="project" value="UniProtKB"/>
</dbReference>
<dbReference type="GO" id="GO:0043262">
    <property type="term" value="F:ADP phosphatase activity"/>
    <property type="evidence" value="ECO:0000315"/>
    <property type="project" value="MGI"/>
</dbReference>
<dbReference type="GO" id="GO:0004050">
    <property type="term" value="F:apyrase activity"/>
    <property type="evidence" value="ECO:0007669"/>
    <property type="project" value="UniProtKB-EC"/>
</dbReference>
<dbReference type="GO" id="GO:0005524">
    <property type="term" value="F:ATP binding"/>
    <property type="evidence" value="ECO:0007669"/>
    <property type="project" value="UniProtKB-KW"/>
</dbReference>
<dbReference type="GO" id="GO:0016887">
    <property type="term" value="F:ATP hydrolysis activity"/>
    <property type="evidence" value="ECO:0007669"/>
    <property type="project" value="RHEA"/>
</dbReference>
<dbReference type="GO" id="GO:0036384">
    <property type="term" value="F:CDP phosphatase activity"/>
    <property type="evidence" value="ECO:0007669"/>
    <property type="project" value="RHEA"/>
</dbReference>
<dbReference type="GO" id="GO:0043273">
    <property type="term" value="F:CTPase activity"/>
    <property type="evidence" value="ECO:0007669"/>
    <property type="project" value="RHEA"/>
</dbReference>
<dbReference type="GO" id="GO:0004382">
    <property type="term" value="F:GDP phosphatase activity"/>
    <property type="evidence" value="ECO:0007669"/>
    <property type="project" value="RHEA"/>
</dbReference>
<dbReference type="GO" id="GO:0003924">
    <property type="term" value="F:GTPase activity"/>
    <property type="evidence" value="ECO:0007669"/>
    <property type="project" value="RHEA"/>
</dbReference>
<dbReference type="GO" id="GO:1990003">
    <property type="term" value="F:IDP phosphatase activity"/>
    <property type="evidence" value="ECO:0007669"/>
    <property type="project" value="RHEA"/>
</dbReference>
<dbReference type="GO" id="GO:0103023">
    <property type="term" value="F:ITPase activity"/>
    <property type="evidence" value="ECO:0007669"/>
    <property type="project" value="RHEA"/>
</dbReference>
<dbReference type="GO" id="GO:0017110">
    <property type="term" value="F:nucleoside diphosphate phosphatase activity"/>
    <property type="evidence" value="ECO:0000314"/>
    <property type="project" value="MGI"/>
</dbReference>
<dbReference type="GO" id="GO:0017111">
    <property type="term" value="F:ribonucleoside triphosphate phosphatase activity"/>
    <property type="evidence" value="ECO:0000314"/>
    <property type="project" value="MGI"/>
</dbReference>
<dbReference type="GO" id="GO:0045134">
    <property type="term" value="F:UDP phosphatase activity"/>
    <property type="evidence" value="ECO:0007669"/>
    <property type="project" value="RHEA"/>
</dbReference>
<dbReference type="GO" id="GO:0046032">
    <property type="term" value="P:ADP catabolic process"/>
    <property type="evidence" value="ECO:0000315"/>
    <property type="project" value="MGI"/>
</dbReference>
<dbReference type="GO" id="GO:0007186">
    <property type="term" value="P:G protein-coupled receptor signaling pathway"/>
    <property type="evidence" value="ECO:0000314"/>
    <property type="project" value="MGI"/>
</dbReference>
<dbReference type="GO" id="GO:0030168">
    <property type="term" value="P:platelet activation"/>
    <property type="evidence" value="ECO:0000314"/>
    <property type="project" value="MGI"/>
</dbReference>
<dbReference type="GO" id="GO:0070527">
    <property type="term" value="P:platelet aggregation"/>
    <property type="evidence" value="ECO:0000250"/>
    <property type="project" value="UniProtKB"/>
</dbReference>
<dbReference type="GO" id="GO:0009181">
    <property type="term" value="P:purine ribonucleoside diphosphate catabolic process"/>
    <property type="evidence" value="ECO:0000314"/>
    <property type="project" value="MGI"/>
</dbReference>
<dbReference type="CDD" id="cd24110">
    <property type="entry name" value="ASKHA_NBD_NTPDase1"/>
    <property type="match status" value="1"/>
</dbReference>
<dbReference type="FunFam" id="3.30.420.150:FF:000002">
    <property type="entry name" value="Ectonucleoside triphosphate diphosphohydrolase 1"/>
    <property type="match status" value="1"/>
</dbReference>
<dbReference type="FunFam" id="3.30.420.40:FF:000068">
    <property type="entry name" value="Ectonucleoside triphosphate diphosphohydrolase 1"/>
    <property type="match status" value="1"/>
</dbReference>
<dbReference type="Gene3D" id="3.30.420.40">
    <property type="match status" value="1"/>
</dbReference>
<dbReference type="Gene3D" id="3.30.420.150">
    <property type="entry name" value="Exopolyphosphatase. Domain 2"/>
    <property type="match status" value="1"/>
</dbReference>
<dbReference type="InterPro" id="IPR000407">
    <property type="entry name" value="GDA1_CD39_NTPase"/>
</dbReference>
<dbReference type="PANTHER" id="PTHR11782">
    <property type="entry name" value="ADENOSINE/GUANOSINE DIPHOSPHATASE"/>
    <property type="match status" value="1"/>
</dbReference>
<dbReference type="PANTHER" id="PTHR11782:SF32">
    <property type="entry name" value="ECTONUCLEOSIDE TRIPHOSPHATE DIPHOSPHOHYDROLASE 1"/>
    <property type="match status" value="1"/>
</dbReference>
<dbReference type="Pfam" id="PF01150">
    <property type="entry name" value="GDA1_CD39"/>
    <property type="match status" value="1"/>
</dbReference>
<dbReference type="PROSITE" id="PS01238">
    <property type="entry name" value="GDA1_CD39_NTPASE"/>
    <property type="match status" value="1"/>
</dbReference>
<sequence>MEDIKDSKVKRFCSKNILIILGFTSILAVIALIAVGLTQNKPLPENVKYGIVLDAGSSHTNLYIYKWPAEKENDTGVVQQLEECQVKGPGISKYAQKTDEIGAYLAECMELSTELIPTSKHHQTPVYLGATAGMRLLRMESEQSADEVLAAVSTSLKSYPFDFQGAKIITGQEEGAYGWITINYLLGRFTQEQSWLSLISDSQKQETFGALDLGGASTQITFVPQNSTIESPENSLQFRLYGEDYTVYTHSFLCYGKDQALWQKLAKDIQVSSGGVLKDPCFNPGYEKVVNVSELYGTPCTKRFEKKLPFDQFRIQGTGDYEQCHQSILELFNNSHCPYSQCAFNGVFLPPLHGSFGAFSAFYFVMDFFKKVAKNSVISQEKMTEITKNFCSKSWEETKTSYPSVKEKYLSEYCFSGAYILSLLQGYNFTDSSWEQIHFMGKIKDSNAGWTLGYMLNLTNMIPAEQPLSPPLPHSTYIGLMVLFSLLLVAVAITGLFIYSKPSYFWKEAV</sequence>
<comment type="function">
    <text evidence="2">Catalyzes the hydrolysis of both di- and triphosphate nucleotides (NDPs and NTPs) and hydrolyze NTPs to nucleotide monophosphates (NMPs) in two distinct successive phosphate-releasing steps, with NDPs as intermediates and participates in the regulation of extracellular levels of nucleotides. By hydrolyzing proinflammatory ATP and platelet-activating ADP to AMP, it blocks platelet aggregation and supports blood flow.</text>
</comment>
<comment type="catalytic activity">
    <reaction evidence="2">
        <text>a ribonucleoside 5'-triphosphate + 2 H2O = a ribonucleoside 5'-phosphate + 2 phosphate + 2 H(+)</text>
        <dbReference type="Rhea" id="RHEA:36795"/>
        <dbReference type="ChEBI" id="CHEBI:15377"/>
        <dbReference type="ChEBI" id="CHEBI:15378"/>
        <dbReference type="ChEBI" id="CHEBI:43474"/>
        <dbReference type="ChEBI" id="CHEBI:58043"/>
        <dbReference type="ChEBI" id="CHEBI:61557"/>
        <dbReference type="EC" id="3.6.1.5"/>
    </reaction>
    <physiologicalReaction direction="left-to-right" evidence="2">
        <dbReference type="Rhea" id="RHEA:36796"/>
    </physiologicalReaction>
</comment>
<comment type="catalytic activity">
    <reaction evidence="2">
        <text>a ribonucleoside 5'-triphosphate + H2O = a ribonucleoside 5'-diphosphate + phosphate + H(+)</text>
        <dbReference type="Rhea" id="RHEA:23680"/>
        <dbReference type="ChEBI" id="CHEBI:15377"/>
        <dbReference type="ChEBI" id="CHEBI:15378"/>
        <dbReference type="ChEBI" id="CHEBI:43474"/>
        <dbReference type="ChEBI" id="CHEBI:57930"/>
        <dbReference type="ChEBI" id="CHEBI:61557"/>
    </reaction>
    <physiologicalReaction direction="left-to-right" evidence="2">
        <dbReference type="Rhea" id="RHEA:23681"/>
    </physiologicalReaction>
</comment>
<comment type="catalytic activity">
    <reaction evidence="2">
        <text>a ribonucleoside 5'-diphosphate + H2O = a ribonucleoside 5'-phosphate + phosphate + H(+)</text>
        <dbReference type="Rhea" id="RHEA:36799"/>
        <dbReference type="ChEBI" id="CHEBI:15377"/>
        <dbReference type="ChEBI" id="CHEBI:15378"/>
        <dbReference type="ChEBI" id="CHEBI:43474"/>
        <dbReference type="ChEBI" id="CHEBI:57930"/>
        <dbReference type="ChEBI" id="CHEBI:58043"/>
    </reaction>
    <physiologicalReaction direction="left-to-right" evidence="2">
        <dbReference type="Rhea" id="RHEA:36800"/>
    </physiologicalReaction>
</comment>
<comment type="catalytic activity">
    <reaction evidence="2">
        <text>ATP + 2 H2O = AMP + 2 phosphate + 2 H(+)</text>
        <dbReference type="Rhea" id="RHEA:20988"/>
        <dbReference type="ChEBI" id="CHEBI:15377"/>
        <dbReference type="ChEBI" id="CHEBI:15378"/>
        <dbReference type="ChEBI" id="CHEBI:30616"/>
        <dbReference type="ChEBI" id="CHEBI:43474"/>
        <dbReference type="ChEBI" id="CHEBI:456215"/>
    </reaction>
    <physiologicalReaction direction="left-to-right" evidence="2">
        <dbReference type="Rhea" id="RHEA:20989"/>
    </physiologicalReaction>
</comment>
<comment type="catalytic activity">
    <reaction evidence="2">
        <text>ATP + H2O = ADP + phosphate + H(+)</text>
        <dbReference type="Rhea" id="RHEA:13065"/>
        <dbReference type="ChEBI" id="CHEBI:15377"/>
        <dbReference type="ChEBI" id="CHEBI:15378"/>
        <dbReference type="ChEBI" id="CHEBI:30616"/>
        <dbReference type="ChEBI" id="CHEBI:43474"/>
        <dbReference type="ChEBI" id="CHEBI:456216"/>
    </reaction>
    <physiologicalReaction direction="left-to-right" evidence="2">
        <dbReference type="Rhea" id="RHEA:13066"/>
    </physiologicalReaction>
</comment>
<comment type="catalytic activity">
    <reaction evidence="2">
        <text>ADP + H2O = AMP + phosphate + H(+)</text>
        <dbReference type="Rhea" id="RHEA:61436"/>
        <dbReference type="ChEBI" id="CHEBI:15377"/>
        <dbReference type="ChEBI" id="CHEBI:15378"/>
        <dbReference type="ChEBI" id="CHEBI:43474"/>
        <dbReference type="ChEBI" id="CHEBI:456215"/>
        <dbReference type="ChEBI" id="CHEBI:456216"/>
    </reaction>
    <physiologicalReaction direction="left-to-right" evidence="2">
        <dbReference type="Rhea" id="RHEA:61437"/>
    </physiologicalReaction>
</comment>
<comment type="catalytic activity">
    <reaction evidence="2">
        <text>CTP + 2 H2O = CMP + 2 phosphate + 2 H(+)</text>
        <dbReference type="Rhea" id="RHEA:64908"/>
        <dbReference type="ChEBI" id="CHEBI:15377"/>
        <dbReference type="ChEBI" id="CHEBI:15378"/>
        <dbReference type="ChEBI" id="CHEBI:37563"/>
        <dbReference type="ChEBI" id="CHEBI:43474"/>
        <dbReference type="ChEBI" id="CHEBI:60377"/>
    </reaction>
    <physiologicalReaction direction="left-to-right" evidence="2">
        <dbReference type="Rhea" id="RHEA:64909"/>
    </physiologicalReaction>
</comment>
<comment type="catalytic activity">
    <reaction evidence="2">
        <text>CTP + H2O = CDP + phosphate + H(+)</text>
        <dbReference type="Rhea" id="RHEA:29387"/>
        <dbReference type="ChEBI" id="CHEBI:15377"/>
        <dbReference type="ChEBI" id="CHEBI:15378"/>
        <dbReference type="ChEBI" id="CHEBI:37563"/>
        <dbReference type="ChEBI" id="CHEBI:43474"/>
        <dbReference type="ChEBI" id="CHEBI:58069"/>
    </reaction>
    <physiologicalReaction direction="left-to-right" evidence="2">
        <dbReference type="Rhea" id="RHEA:29388"/>
    </physiologicalReaction>
</comment>
<comment type="catalytic activity">
    <reaction evidence="2">
        <text>CDP + H2O = CMP + phosphate + H(+)</text>
        <dbReference type="Rhea" id="RHEA:64880"/>
        <dbReference type="ChEBI" id="CHEBI:15377"/>
        <dbReference type="ChEBI" id="CHEBI:15378"/>
        <dbReference type="ChEBI" id="CHEBI:43474"/>
        <dbReference type="ChEBI" id="CHEBI:58069"/>
        <dbReference type="ChEBI" id="CHEBI:60377"/>
    </reaction>
    <physiologicalReaction direction="left-to-right" evidence="2">
        <dbReference type="Rhea" id="RHEA:64881"/>
    </physiologicalReaction>
</comment>
<comment type="catalytic activity">
    <reaction evidence="2">
        <text>GTP + 2 H2O = GMP + 2 phosphate + 2 H(+)</text>
        <dbReference type="Rhea" id="RHEA:64904"/>
        <dbReference type="ChEBI" id="CHEBI:15377"/>
        <dbReference type="ChEBI" id="CHEBI:15378"/>
        <dbReference type="ChEBI" id="CHEBI:37565"/>
        <dbReference type="ChEBI" id="CHEBI:43474"/>
        <dbReference type="ChEBI" id="CHEBI:58115"/>
    </reaction>
    <physiologicalReaction direction="left-to-right" evidence="2">
        <dbReference type="Rhea" id="RHEA:64905"/>
    </physiologicalReaction>
</comment>
<comment type="catalytic activity">
    <reaction evidence="2">
        <text>GTP + H2O = GDP + phosphate + H(+)</text>
        <dbReference type="Rhea" id="RHEA:19669"/>
        <dbReference type="ChEBI" id="CHEBI:15377"/>
        <dbReference type="ChEBI" id="CHEBI:15378"/>
        <dbReference type="ChEBI" id="CHEBI:37565"/>
        <dbReference type="ChEBI" id="CHEBI:43474"/>
        <dbReference type="ChEBI" id="CHEBI:58189"/>
    </reaction>
    <physiologicalReaction direction="left-to-right" evidence="2">
        <dbReference type="Rhea" id="RHEA:19670"/>
    </physiologicalReaction>
</comment>
<comment type="catalytic activity">
    <reaction evidence="2">
        <text>GDP + H2O = GMP + phosphate + H(+)</text>
        <dbReference type="Rhea" id="RHEA:22156"/>
        <dbReference type="ChEBI" id="CHEBI:15377"/>
        <dbReference type="ChEBI" id="CHEBI:15378"/>
        <dbReference type="ChEBI" id="CHEBI:43474"/>
        <dbReference type="ChEBI" id="CHEBI:58115"/>
        <dbReference type="ChEBI" id="CHEBI:58189"/>
    </reaction>
    <physiologicalReaction direction="left-to-right" evidence="2">
        <dbReference type="Rhea" id="RHEA:22157"/>
    </physiologicalReaction>
</comment>
<comment type="catalytic activity">
    <reaction evidence="2">
        <text>ITP + 2 H2O = IMP + 2 phosphate + 2 H(+)</text>
        <dbReference type="Rhea" id="RHEA:77735"/>
        <dbReference type="ChEBI" id="CHEBI:15377"/>
        <dbReference type="ChEBI" id="CHEBI:15378"/>
        <dbReference type="ChEBI" id="CHEBI:43474"/>
        <dbReference type="ChEBI" id="CHEBI:58053"/>
        <dbReference type="ChEBI" id="CHEBI:61402"/>
    </reaction>
    <physiologicalReaction direction="left-to-right" evidence="2">
        <dbReference type="Rhea" id="RHEA:77736"/>
    </physiologicalReaction>
</comment>
<comment type="catalytic activity">
    <reaction evidence="2">
        <text>ITP + H2O = IDP + phosphate + H(+)</text>
        <dbReference type="Rhea" id="RHEA:28330"/>
        <dbReference type="ChEBI" id="CHEBI:15377"/>
        <dbReference type="ChEBI" id="CHEBI:15378"/>
        <dbReference type="ChEBI" id="CHEBI:43474"/>
        <dbReference type="ChEBI" id="CHEBI:58280"/>
        <dbReference type="ChEBI" id="CHEBI:61402"/>
    </reaction>
    <physiologicalReaction direction="left-to-right" evidence="2">
        <dbReference type="Rhea" id="RHEA:28331"/>
    </physiologicalReaction>
</comment>
<comment type="catalytic activity">
    <reaction evidence="2">
        <text>IDP + H2O = IMP + phosphate + H(+)</text>
        <dbReference type="Rhea" id="RHEA:35207"/>
        <dbReference type="ChEBI" id="CHEBI:15377"/>
        <dbReference type="ChEBI" id="CHEBI:15378"/>
        <dbReference type="ChEBI" id="CHEBI:43474"/>
        <dbReference type="ChEBI" id="CHEBI:58053"/>
        <dbReference type="ChEBI" id="CHEBI:58280"/>
    </reaction>
    <physiologicalReaction direction="left-to-right" evidence="2">
        <dbReference type="Rhea" id="RHEA:35208"/>
    </physiologicalReaction>
</comment>
<comment type="catalytic activity">
    <reaction evidence="3">
        <text>UTP + 2 H2O = UMP + 2 phosphate + 2 H(+)</text>
        <dbReference type="Rhea" id="RHEA:64896"/>
        <dbReference type="ChEBI" id="CHEBI:15377"/>
        <dbReference type="ChEBI" id="CHEBI:15378"/>
        <dbReference type="ChEBI" id="CHEBI:43474"/>
        <dbReference type="ChEBI" id="CHEBI:46398"/>
        <dbReference type="ChEBI" id="CHEBI:57865"/>
    </reaction>
    <physiologicalReaction direction="left-to-right" evidence="3">
        <dbReference type="Rhea" id="RHEA:64897"/>
    </physiologicalReaction>
</comment>
<comment type="catalytic activity">
    <reaction evidence="3">
        <text>UTP + H2O = UDP + phosphate + H(+)</text>
        <dbReference type="Rhea" id="RHEA:64900"/>
        <dbReference type="ChEBI" id="CHEBI:15377"/>
        <dbReference type="ChEBI" id="CHEBI:15378"/>
        <dbReference type="ChEBI" id="CHEBI:43474"/>
        <dbReference type="ChEBI" id="CHEBI:46398"/>
        <dbReference type="ChEBI" id="CHEBI:58223"/>
    </reaction>
    <physiologicalReaction direction="left-to-right" evidence="3">
        <dbReference type="Rhea" id="RHEA:64901"/>
    </physiologicalReaction>
</comment>
<comment type="catalytic activity">
    <reaction evidence="3">
        <text>UDP + H2O = UMP + phosphate + H(+)</text>
        <dbReference type="Rhea" id="RHEA:64876"/>
        <dbReference type="ChEBI" id="CHEBI:15377"/>
        <dbReference type="ChEBI" id="CHEBI:15378"/>
        <dbReference type="ChEBI" id="CHEBI:43474"/>
        <dbReference type="ChEBI" id="CHEBI:57865"/>
        <dbReference type="ChEBI" id="CHEBI:58223"/>
    </reaction>
    <physiologicalReaction direction="left-to-right" evidence="3">
        <dbReference type="Rhea" id="RHEA:64877"/>
    </physiologicalReaction>
</comment>
<comment type="cofactor">
    <cofactor evidence="2">
        <name>Ca(2+)</name>
        <dbReference type="ChEBI" id="CHEBI:29108"/>
    </cofactor>
    <cofactor evidence="2">
        <name>Mg(2+)</name>
        <dbReference type="ChEBI" id="CHEBI:18420"/>
    </cofactor>
</comment>
<comment type="subunit">
    <text evidence="4">Homodimer; disulfide-linked.</text>
</comment>
<comment type="subcellular location">
    <subcellularLocation>
        <location evidence="2">Membrane</location>
        <topology evidence="2">Multi-pass membrane protein</topology>
    </subcellularLocation>
    <subcellularLocation>
        <location evidence="2">Membrane</location>
        <location evidence="2">Caveola</location>
    </subcellularLocation>
</comment>
<comment type="PTM">
    <text evidence="3">N-glycosylated.</text>
</comment>
<comment type="PTM">
    <text evidence="2">The N-terminus is blocked.</text>
</comment>
<comment type="PTM">
    <text evidence="2">Palmitoylated on Cys-13; which is required for caveola targeting.</text>
</comment>
<comment type="similarity">
    <text evidence="7">Belongs to the GDA1/CD39 NTPase family.</text>
</comment>
<reference key="1">
    <citation type="journal article" date="1994" name="J. Immunol.">
        <title>The CD39 lymphoid cell activation antigen. Molecular cloning and structural characterization.</title>
        <authorList>
            <person name="Maliszewski C.R."/>
            <person name="Delespesse G.J.T."/>
            <person name="Schoenborn M.A."/>
            <person name="Armitage R.J."/>
            <person name="Fanslow W.C."/>
            <person name="Nakajima T."/>
            <person name="Baker E."/>
            <person name="Sutherland G.R."/>
            <person name="Poindexter K."/>
            <person name="Birks C."/>
            <person name="Alpert A."/>
            <person name="Friend D."/>
            <person name="Gimpel S.D."/>
            <person name="Gayle R.B. III"/>
        </authorList>
    </citation>
    <scope>NUCLEOTIDE SEQUENCE [MRNA]</scope>
</reference>
<reference key="2">
    <citation type="journal article" date="1998" name="Cytogenet. Cell Genet.">
        <title>Gene structure and chromosome location of mouse Cd39 coding for an ecto-apyrase.</title>
        <authorList>
            <person name="Schoenborn M.A."/>
            <person name="Jenkins N.A."/>
            <person name="Copeland N.G."/>
            <person name="Gilbert D.J."/>
            <person name="Gayle R.B. III"/>
            <person name="Maliszewski C.R."/>
        </authorList>
    </citation>
    <scope>NUCLEOTIDE SEQUENCE [GENOMIC DNA]</scope>
    <source>
        <strain>129/SvJ</strain>
    </source>
</reference>
<reference key="3">
    <citation type="journal article" date="2010" name="Cell">
        <title>A tissue-specific atlas of mouse protein phosphorylation and expression.</title>
        <authorList>
            <person name="Huttlin E.L."/>
            <person name="Jedrychowski M.P."/>
            <person name="Elias J.E."/>
            <person name="Goswami T."/>
            <person name="Rad R."/>
            <person name="Beausoleil S.A."/>
            <person name="Villen J."/>
            <person name="Haas W."/>
            <person name="Sowa M.E."/>
            <person name="Gygi S.P."/>
        </authorList>
    </citation>
    <scope>IDENTIFICATION BY MASS SPECTROMETRY [LARGE SCALE ANALYSIS]</scope>
    <source>
        <tissue>Brain</tissue>
        <tissue>Brown adipose tissue</tissue>
        <tissue>Heart</tissue>
        <tissue>Kidney</tissue>
        <tissue>Lung</tissue>
        <tissue>Spleen</tissue>
        <tissue>Testis</tissue>
    </source>
</reference>
<gene>
    <name evidence="8" type="primary">Entpd1</name>
    <name evidence="6" type="synonym">Cd39</name>
</gene>
<accession>P55772</accession>
<feature type="chain" id="PRO_0000209903" description="Ectonucleoside triphosphate diphosphohydrolase 1">
    <location>
        <begin position="1"/>
        <end position="510"/>
    </location>
</feature>
<feature type="topological domain" description="Cytoplasmic" evidence="5">
    <location>
        <begin position="1"/>
        <end position="16"/>
    </location>
</feature>
<feature type="transmembrane region" description="Helical" evidence="5">
    <location>
        <begin position="17"/>
        <end position="37"/>
    </location>
</feature>
<feature type="topological domain" description="Extracellular" evidence="5">
    <location>
        <begin position="38"/>
        <end position="478"/>
    </location>
</feature>
<feature type="transmembrane region" description="Helical" evidence="5">
    <location>
        <begin position="479"/>
        <end position="499"/>
    </location>
</feature>
<feature type="topological domain" description="Cytoplasmic" evidence="5">
    <location>
        <begin position="500"/>
        <end position="510"/>
    </location>
</feature>
<feature type="active site" description="Proton acceptor" evidence="1">
    <location>
        <position position="174"/>
    </location>
</feature>
<feature type="glycosylation site" description="N-linked (GlcNAc...) asparagine" evidence="5">
    <location>
        <position position="73"/>
    </location>
</feature>
<feature type="glycosylation site" description="N-linked (GlcNAc...) asparagine" evidence="5">
    <location>
        <position position="226"/>
    </location>
</feature>
<feature type="glycosylation site" description="N-linked (GlcNAc...) asparagine" evidence="5">
    <location>
        <position position="291"/>
    </location>
</feature>
<feature type="glycosylation site" description="N-linked (GlcNAc...) asparagine" evidence="5">
    <location>
        <position position="333"/>
    </location>
</feature>
<feature type="glycosylation site" description="N-linked (GlcNAc...) asparagine" evidence="5">
    <location>
        <position position="428"/>
    </location>
</feature>
<feature type="glycosylation site" description="N-linked (GlcNAc...) asparagine" evidence="5">
    <location>
        <position position="457"/>
    </location>
</feature>
<feature type="disulfide bond" evidence="3">
    <location>
        <begin position="84"/>
        <end position="108"/>
    </location>
</feature>
<feature type="disulfide bond" evidence="3">
    <location>
        <begin position="254"/>
        <end position="300"/>
    </location>
</feature>
<feature type="disulfide bond" evidence="3">
    <location>
        <begin position="281"/>
        <end position="324"/>
    </location>
</feature>
<feature type="disulfide bond" evidence="3">
    <location>
        <begin position="337"/>
        <end position="342"/>
    </location>
</feature>
<feature type="disulfide bond" evidence="3">
    <location>
        <begin position="391"/>
        <end position="414"/>
    </location>
</feature>
<evidence type="ECO:0000250" key="1">
    <source>
        <dbReference type="UniProtKB" id="O35795"/>
    </source>
</evidence>
<evidence type="ECO:0000250" key="2">
    <source>
        <dbReference type="UniProtKB" id="P49961"/>
    </source>
</evidence>
<evidence type="ECO:0000250" key="3">
    <source>
        <dbReference type="UniProtKB" id="P97687"/>
    </source>
</evidence>
<evidence type="ECO:0000250" key="4">
    <source>
        <dbReference type="UniProtKB" id="Q9MYU4"/>
    </source>
</evidence>
<evidence type="ECO:0000255" key="5"/>
<evidence type="ECO:0000303" key="6">
    <source>
    </source>
</evidence>
<evidence type="ECO:0000305" key="7"/>
<evidence type="ECO:0000312" key="8">
    <source>
        <dbReference type="MGI" id="MGI:102805"/>
    </source>
</evidence>
<protein>
    <recommendedName>
        <fullName evidence="7">Ectonucleoside triphosphate diphosphohydrolase 1</fullName>
        <shortName>NTPDase 1</shortName>
        <ecNumber evidence="2">3.6.1.5</ecNumber>
    </recommendedName>
    <alternativeName>
        <fullName evidence="2">ATP diphosphohydrolase</fullName>
        <shortName evidence="2">ATP-DPH</shortName>
        <shortName evidence="2">ATPDase</shortName>
    </alternativeName>
    <alternativeName>
        <fullName evidence="2">Ecto-ATP diphosphohydrolase 1</fullName>
        <shortName>Ecto-ATPDase 1</shortName>
        <shortName>Ecto-ATPase 1</shortName>
    </alternativeName>
    <alternativeName>
        <fullName evidence="2">Ecto-apyrase</fullName>
    </alternativeName>
    <alternativeName>
        <fullName evidence="6">Lymphoid cell activation antigen</fullName>
    </alternativeName>
    <alternativeName>
        <fullName evidence="3">Nucleoside triphosphate diphosphohydrolase 1</fullName>
        <shortName evidence="3">NTPDase1</shortName>
    </alternativeName>
    <cdAntigenName evidence="6">CD39</cdAntigenName>
</protein>
<keyword id="KW-0067">ATP-binding</keyword>
<keyword id="KW-0106">Calcium</keyword>
<keyword id="KW-1015">Disulfide bond</keyword>
<keyword id="KW-0325">Glycoprotein</keyword>
<keyword id="KW-0378">Hydrolase</keyword>
<keyword id="KW-0460">Magnesium</keyword>
<keyword id="KW-0472">Membrane</keyword>
<keyword id="KW-0547">Nucleotide-binding</keyword>
<keyword id="KW-1185">Reference proteome</keyword>
<keyword id="KW-0812">Transmembrane</keyword>
<keyword id="KW-1133">Transmembrane helix</keyword>
<name>ENTP1_MOUSE</name>